<dbReference type="PIR" id="E01937">
    <property type="entry name" value="KVMS69"/>
</dbReference>
<dbReference type="SMR" id="P01669"/>
<dbReference type="FunCoup" id="P01669">
    <property type="interactions" value="762"/>
</dbReference>
<dbReference type="jPOST" id="P01669"/>
<dbReference type="InParanoid" id="P01669"/>
<dbReference type="Proteomes" id="UP000000589">
    <property type="component" value="Unplaced"/>
</dbReference>
<dbReference type="RNAct" id="P01669">
    <property type="molecule type" value="protein"/>
</dbReference>
<dbReference type="GO" id="GO:0019814">
    <property type="term" value="C:immunoglobulin complex"/>
    <property type="evidence" value="ECO:0000318"/>
    <property type="project" value="GO_Central"/>
</dbReference>
<dbReference type="GO" id="GO:0002250">
    <property type="term" value="P:adaptive immune response"/>
    <property type="evidence" value="ECO:0007669"/>
    <property type="project" value="UniProtKB-KW"/>
</dbReference>
<dbReference type="GO" id="GO:0006955">
    <property type="term" value="P:immune response"/>
    <property type="evidence" value="ECO:0000318"/>
    <property type="project" value="GO_Central"/>
</dbReference>
<dbReference type="CDD" id="cd04980">
    <property type="entry name" value="IgV_L_kappa"/>
    <property type="match status" value="1"/>
</dbReference>
<dbReference type="FunFam" id="2.60.40.10:FF:000350">
    <property type="entry name" value="Immunoglobulin kappa chain variable 18-36"/>
    <property type="match status" value="1"/>
</dbReference>
<dbReference type="Gene3D" id="2.60.40.10">
    <property type="entry name" value="Immunoglobulins"/>
    <property type="match status" value="1"/>
</dbReference>
<dbReference type="InterPro" id="IPR007110">
    <property type="entry name" value="Ig-like_dom"/>
</dbReference>
<dbReference type="InterPro" id="IPR036179">
    <property type="entry name" value="Ig-like_dom_sf"/>
</dbReference>
<dbReference type="InterPro" id="IPR013783">
    <property type="entry name" value="Ig-like_fold"/>
</dbReference>
<dbReference type="InterPro" id="IPR003599">
    <property type="entry name" value="Ig_sub"/>
</dbReference>
<dbReference type="InterPro" id="IPR013106">
    <property type="entry name" value="Ig_V-set"/>
</dbReference>
<dbReference type="InterPro" id="IPR050150">
    <property type="entry name" value="IgV_Light_Chain"/>
</dbReference>
<dbReference type="PANTHER" id="PTHR23267">
    <property type="entry name" value="IMMUNOGLOBULIN LIGHT CHAIN"/>
    <property type="match status" value="1"/>
</dbReference>
<dbReference type="Pfam" id="PF07686">
    <property type="entry name" value="V-set"/>
    <property type="match status" value="1"/>
</dbReference>
<dbReference type="SMART" id="SM00409">
    <property type="entry name" value="IG"/>
    <property type="match status" value="1"/>
</dbReference>
<dbReference type="SMART" id="SM00406">
    <property type="entry name" value="IGv"/>
    <property type="match status" value="1"/>
</dbReference>
<dbReference type="SUPFAM" id="SSF48726">
    <property type="entry name" value="Immunoglobulin"/>
    <property type="match status" value="1"/>
</dbReference>
<dbReference type="PROSITE" id="PS50835">
    <property type="entry name" value="IG_LIKE"/>
    <property type="match status" value="1"/>
</dbReference>
<name>KV3AH_MOUSE</name>
<feature type="chain" id="PRO_0000059791" description="Ig kappa chain V-III region PC 7769">
    <location>
        <begin position="1"/>
        <end position="111" status="greater than"/>
    </location>
</feature>
<feature type="region of interest" description="Framework-1">
    <location>
        <begin position="1"/>
        <end position="23"/>
    </location>
</feature>
<feature type="region of interest" description="Complementarity-determining-1">
    <location>
        <begin position="24"/>
        <end position="38"/>
    </location>
</feature>
<feature type="region of interest" description="Framework-2">
    <location>
        <begin position="39"/>
        <end position="53"/>
    </location>
</feature>
<feature type="region of interest" description="Complementarity-determining-2">
    <location>
        <begin position="54"/>
        <end position="60"/>
    </location>
</feature>
<feature type="region of interest" description="Framework-3">
    <location>
        <begin position="61"/>
        <end position="92"/>
    </location>
</feature>
<feature type="region of interest" description="Complementarity-determining-3">
    <location>
        <begin position="93"/>
        <end position="101"/>
    </location>
</feature>
<feature type="region of interest" description="Framework-4">
    <location>
        <begin position="102"/>
        <end position="111"/>
    </location>
</feature>
<feature type="disulfide bond" evidence="1">
    <location>
        <begin position="23"/>
        <end position="92"/>
    </location>
</feature>
<feature type="non-terminal residue">
    <location>
        <position position="111"/>
    </location>
</feature>
<organism>
    <name type="scientific">Mus musculus</name>
    <name type="common">Mouse</name>
    <dbReference type="NCBI Taxonomy" id="10090"/>
    <lineage>
        <taxon>Eukaryota</taxon>
        <taxon>Metazoa</taxon>
        <taxon>Chordata</taxon>
        <taxon>Craniata</taxon>
        <taxon>Vertebrata</taxon>
        <taxon>Euteleostomi</taxon>
        <taxon>Mammalia</taxon>
        <taxon>Eutheria</taxon>
        <taxon>Euarchontoglires</taxon>
        <taxon>Glires</taxon>
        <taxon>Rodentia</taxon>
        <taxon>Myomorpha</taxon>
        <taxon>Muroidea</taxon>
        <taxon>Muridae</taxon>
        <taxon>Murinae</taxon>
        <taxon>Mus</taxon>
        <taxon>Mus</taxon>
    </lineage>
</organism>
<evidence type="ECO:0000255" key="1">
    <source>
        <dbReference type="PROSITE-ProRule" id="PRU00114"/>
    </source>
</evidence>
<accession>P01669</accession>
<sequence>DIVLTQSPASLAVSLGQRATISCKASQSVDYDGDSYMNWYQQKPGQPPKVLIFAASNLESGIPARFSGSGSGTDFTLNIHPVEEEDAATYYCQQSNEDPWTFGSGTKLEIK</sequence>
<proteinExistence type="evidence at protein level"/>
<keyword id="KW-1064">Adaptive immunity</keyword>
<keyword id="KW-0903">Direct protein sequencing</keyword>
<keyword id="KW-1015">Disulfide bond</keyword>
<keyword id="KW-0391">Immunity</keyword>
<keyword id="KW-1280">Immunoglobulin</keyword>
<keyword id="KW-1185">Reference proteome</keyword>
<protein>
    <recommendedName>
        <fullName>Ig kappa chain V-III region PC 7769</fullName>
    </recommendedName>
</protein>
<reference key="1">
    <citation type="journal article" date="1978" name="Nature">
        <title>Rearrangement of genetic information may produce immunoglobulin diversity.</title>
        <authorList>
            <person name="Weigert M."/>
            <person name="Gatmaitan L."/>
            <person name="Loh E."/>
            <person name="Schilling J."/>
            <person name="Hood L.E."/>
        </authorList>
    </citation>
    <scope>PROTEIN SEQUENCE</scope>
</reference>